<comment type="function">
    <text evidence="1 2">The heterodimer glycoprotein H-glycoprotein L is required for the fusion of viral and plasma membranes leading to virus entry into the host cell. Acts as a functional inhibitor of gH and maintains gH in an inhibited form. Upon binding to host integrins, gL dissociates from gH leading to activation of the viral fusion glycoproteins gB and gH (By similarity). In human cytomegalovirus, forms two distincts complexes to mediate viral entry, a trimer and a pentamer at the surface of the virion envelope. The gH-gL-gO trimer is required for infection in fibroblasts by interacting with host PDGFRA, and in glioblastoma cells by interacting with host EPHA2. The gH-gL-UL128-UL130-UL131A pentamer is essential for viral entry in epithelial, endothelial and myeloid cells via interaction with host NRP2 (By similarity).</text>
</comment>
<comment type="subunit">
    <text evidence="1 2">Interacts with glycoprotein H (gH); this interaction is necessary for the correct processing and cell surface expression of gH (By similarity). Forms the envelope pentamer complex (PC) composed of gH, gL, UL128, UL130, and UL131A. The pentamer interacts with host NRP2. Forms the envelope trimer complex composed of gH, gL, and gO. The trimer interacts with host PDGFRA (By similarity). The trimer also interacts with host EPHA2 (By similarity).</text>
</comment>
<comment type="subcellular location">
    <subcellularLocation>
        <location evidence="2">Virion membrane</location>
        <topology evidence="2">Peripheral membrane protein</topology>
        <orientation evidence="2">Extracellular side</orientation>
    </subcellularLocation>
    <subcellularLocation>
        <location evidence="2">Host cell membrane</location>
        <topology evidence="2">Peripheral membrane protein</topology>
        <orientation evidence="2">Extracellular side</orientation>
    </subcellularLocation>
    <subcellularLocation>
        <location evidence="2">Host Golgi apparatus</location>
        <location evidence="2">Host trans-Golgi network</location>
    </subcellularLocation>
    <text evidence="2">gL associates with the extravirion surface through its binding to gH. During virion morphogenesis, this protein probably accumulates in the host trans-Golgi where secondary envelopment occurs.</text>
</comment>
<comment type="similarity">
    <text evidence="3">Belongs to the herpesviridae glycoprotein L (gL) family. Betaherpesvirinae gL subfamily.</text>
</comment>
<proteinExistence type="inferred from homology"/>
<feature type="signal peptide" evidence="2">
    <location>
        <begin position="1"/>
        <end position="30"/>
    </location>
</feature>
<feature type="chain" id="PRO_0000038285" description="Envelope glycoprotein L" evidence="2">
    <location>
        <begin position="31"/>
        <end position="278"/>
    </location>
</feature>
<feature type="domain" description="gL betaherpesvirus-type" evidence="3">
    <location>
        <begin position="43"/>
        <end position="256"/>
    </location>
</feature>
<feature type="disulfide bond" description="Interchain" evidence="3">
    <location>
        <position position="47"/>
    </location>
</feature>
<feature type="disulfide bond" description="Interchain" evidence="3">
    <location>
        <position position="54"/>
    </location>
</feature>
<feature type="disulfide bond" description="Interchain" evidence="3">
    <location>
        <position position="144"/>
    </location>
</feature>
<feature type="disulfide bond" evidence="3">
    <location>
        <begin position="154"/>
        <end position="159"/>
    </location>
</feature>
<protein>
    <recommendedName>
        <fullName evidence="2">Envelope glycoprotein L</fullName>
        <shortName evidence="2">gL</shortName>
    </recommendedName>
</protein>
<reference key="1">
    <citation type="submission" date="1996-04" db="EMBL/GenBank/DDBJ databases">
        <authorList>
            <person name="Milne R.S.B."/>
            <person name="Mathers K.E."/>
            <person name="Booth J.C."/>
        </authorList>
    </citation>
    <scope>NUCLEOTIDE SEQUENCE [GENOMIC DNA]</scope>
</reference>
<accession>Q68672</accession>
<dbReference type="EMBL" id="U56917">
    <property type="protein sequence ID" value="AAA99168.1"/>
    <property type="molecule type" value="Genomic_DNA"/>
</dbReference>
<dbReference type="SMR" id="Q68672"/>
<dbReference type="GO" id="GO:0044177">
    <property type="term" value="C:host cell Golgi apparatus"/>
    <property type="evidence" value="ECO:0007669"/>
    <property type="project" value="UniProtKB-SubCell"/>
</dbReference>
<dbReference type="GO" id="GO:0020002">
    <property type="term" value="C:host cell plasma membrane"/>
    <property type="evidence" value="ECO:0007669"/>
    <property type="project" value="UniProtKB-SubCell"/>
</dbReference>
<dbReference type="GO" id="GO:0016020">
    <property type="term" value="C:membrane"/>
    <property type="evidence" value="ECO:0007669"/>
    <property type="project" value="UniProtKB-KW"/>
</dbReference>
<dbReference type="GO" id="GO:0019031">
    <property type="term" value="C:viral envelope"/>
    <property type="evidence" value="ECO:0007669"/>
    <property type="project" value="UniProtKB-UniRule"/>
</dbReference>
<dbReference type="GO" id="GO:0055036">
    <property type="term" value="C:virion membrane"/>
    <property type="evidence" value="ECO:0007669"/>
    <property type="project" value="UniProtKB-SubCell"/>
</dbReference>
<dbReference type="GO" id="GO:0098670">
    <property type="term" value="P:entry receptor-mediated virion attachment to host cell"/>
    <property type="evidence" value="ECO:0007669"/>
    <property type="project" value="UniProtKB-KW"/>
</dbReference>
<dbReference type="GO" id="GO:0019064">
    <property type="term" value="P:fusion of virus membrane with host plasma membrane"/>
    <property type="evidence" value="ECO:0007669"/>
    <property type="project" value="UniProtKB-UniRule"/>
</dbReference>
<dbReference type="GO" id="GO:0046718">
    <property type="term" value="P:symbiont entry into host cell"/>
    <property type="evidence" value="ECO:0007669"/>
    <property type="project" value="UniProtKB-KW"/>
</dbReference>
<dbReference type="HAMAP" id="MF_04036">
    <property type="entry name" value="HSV_GL_betahv"/>
    <property type="match status" value="1"/>
</dbReference>
<dbReference type="InterPro" id="IPR002689">
    <property type="entry name" value="Cytomegalo_gL"/>
</dbReference>
<dbReference type="Pfam" id="PF01801">
    <property type="entry name" value="Cytomega_gL"/>
    <property type="match status" value="1"/>
</dbReference>
<dbReference type="PROSITE" id="PS52025">
    <property type="entry name" value="GL_BHV"/>
    <property type="match status" value="1"/>
</dbReference>
<evidence type="ECO:0000250" key="1">
    <source>
        <dbReference type="UniProtKB" id="F5HCH8"/>
    </source>
</evidence>
<evidence type="ECO:0000255" key="2">
    <source>
        <dbReference type="HAMAP-Rule" id="MF_04036"/>
    </source>
</evidence>
<evidence type="ECO:0000255" key="3">
    <source>
        <dbReference type="PROSITE-ProRule" id="PRU01369"/>
    </source>
</evidence>
<gene>
    <name evidence="2" type="primary">gL</name>
    <name type="synonym">UL115</name>
</gene>
<organism>
    <name type="scientific">Human cytomegalovirus (strain 5040)</name>
    <name type="common">HHV-5</name>
    <name type="synonym">Human herpesvirus 5</name>
    <dbReference type="NCBI Taxonomy" id="69165"/>
    <lineage>
        <taxon>Viruses</taxon>
        <taxon>Duplodnaviria</taxon>
        <taxon>Heunggongvirae</taxon>
        <taxon>Peploviricota</taxon>
        <taxon>Herviviricetes</taxon>
        <taxon>Herpesvirales</taxon>
        <taxon>Orthoherpesviridae</taxon>
        <taxon>Betaherpesvirinae</taxon>
        <taxon>Cytomegalovirus</taxon>
        <taxon>Cytomegalovirus humanbeta5</taxon>
        <taxon>Human cytomegalovirus</taxon>
    </lineage>
</organism>
<sequence length="278" mass="30813">MCRRPDCGFSFSPGPVVLLWCCLLLPIVSSVAVSVAPTAAEKVPAECPELTRRCLLGEVFQGDKYESWLRPLVNVTGRNGPLSQLIRYRPVTPEAANSVLLDDAFLDTLALLYNNPDQLRALLTLLSSDTAPRWMTVMRGYSECGDGSPAVYTCVDDLCRGYDLTRLSYGRSIFTEHVLGFELVPPSLFNVVVAIRNEATRTNRAVRLPVSTAAAPEGITLFYGLYNAVKEFCLRHQLDPPLLRHLDKYYAGLPPELKQTRVNLPAHSRYGPQAVDAR</sequence>
<name>GL_HCMV6</name>
<keyword id="KW-1015">Disulfide bond</keyword>
<keyword id="KW-1169">Fusion of virus membrane with host cell membrane</keyword>
<keyword id="KW-1168">Fusion of virus membrane with host membrane</keyword>
<keyword id="KW-0325">Glycoprotein</keyword>
<keyword id="KW-1032">Host cell membrane</keyword>
<keyword id="KW-1040">Host Golgi apparatus</keyword>
<keyword id="KW-1043">Host membrane</keyword>
<keyword id="KW-0945">Host-virus interaction</keyword>
<keyword id="KW-0472">Membrane</keyword>
<keyword id="KW-0732">Signal</keyword>
<keyword id="KW-1161">Viral attachment to host cell</keyword>
<keyword id="KW-1234">Viral attachment to host entry receptor</keyword>
<keyword id="KW-0261">Viral envelope protein</keyword>
<keyword id="KW-1162">Viral penetration into host cytoplasm</keyword>
<keyword id="KW-0946">Virion</keyword>
<keyword id="KW-1160">Virus entry into host cell</keyword>
<organismHost>
    <name type="scientific">Homo sapiens</name>
    <name type="common">Human</name>
    <dbReference type="NCBI Taxonomy" id="9606"/>
</organismHost>